<sequence>MELWTEARALKASLRGESTISLKHHQVIVSEDLSRTSSLPEDFSVECFLDFSEGQKEEEEEVVSVSSSQEQEEQEHDCVFSSQPCIFDQLPSLPDEDVEELEWVSRVVDDCSSPEVSLLLTQTHKTKPSFSRIPVKPRTKRSRNSLTGSRVWPLVSTNHQHAATEQLRKKKQETVLVFQRRCSHCGTNNTPQWRTGPVGPKTLCNACGVRFKSGRLCPEYRPADSPTFSNEIHSNLHRKVLELRKSKELGEETGEASTKSDPVKFGSKW</sequence>
<keyword id="KW-0010">Activator</keyword>
<keyword id="KW-0238">DNA-binding</keyword>
<keyword id="KW-0479">Metal-binding</keyword>
<keyword id="KW-0539">Nucleus</keyword>
<keyword id="KW-1185">Reference proteome</keyword>
<keyword id="KW-0804">Transcription</keyword>
<keyword id="KW-0805">Transcription regulation</keyword>
<keyword id="KW-0862">Zinc</keyword>
<keyword id="KW-0863">Zinc-finger</keyword>
<evidence type="ECO:0000255" key="1"/>
<evidence type="ECO:0000255" key="2">
    <source>
        <dbReference type="PROSITE-ProRule" id="PRU00094"/>
    </source>
</evidence>
<evidence type="ECO:0000256" key="3">
    <source>
        <dbReference type="SAM" id="MobiDB-lite"/>
    </source>
</evidence>
<evidence type="ECO:0000269" key="4">
    <source>
    </source>
</evidence>
<evidence type="ECO:0000305" key="5"/>
<reference key="1">
    <citation type="journal article" date="2002" name="Plant Mol. Biol.">
        <title>Arabidopsis thaliana GATA factors: organisation, expression and DNA-binding characteristics.</title>
        <authorList>
            <person name="Teakle G.R."/>
            <person name="Manfield I.W."/>
            <person name="Graham J.F."/>
            <person name="Gilmartin P.M."/>
        </authorList>
    </citation>
    <scope>NUCLEOTIDE SEQUENCE [MRNA]</scope>
    <scope>FUNCTION</scope>
    <scope>INDUCTION</scope>
    <scope>TISSUE SPECIFICITY</scope>
    <source>
        <strain>cv. Columbia</strain>
    </source>
</reference>
<reference key="2">
    <citation type="journal article" date="1999" name="Nature">
        <title>Sequence and analysis of chromosome 4 of the plant Arabidopsis thaliana.</title>
        <authorList>
            <person name="Mayer K.F.X."/>
            <person name="Schueller C."/>
            <person name="Wambutt R."/>
            <person name="Murphy G."/>
            <person name="Volckaert G."/>
            <person name="Pohl T."/>
            <person name="Duesterhoeft A."/>
            <person name="Stiekema W."/>
            <person name="Entian K.-D."/>
            <person name="Terryn N."/>
            <person name="Harris B."/>
            <person name="Ansorge W."/>
            <person name="Brandt P."/>
            <person name="Grivell L.A."/>
            <person name="Rieger M."/>
            <person name="Weichselgartner M."/>
            <person name="de Simone V."/>
            <person name="Obermaier B."/>
            <person name="Mache R."/>
            <person name="Mueller M."/>
            <person name="Kreis M."/>
            <person name="Delseny M."/>
            <person name="Puigdomenech P."/>
            <person name="Watson M."/>
            <person name="Schmidtheini T."/>
            <person name="Reichert B."/>
            <person name="Portetelle D."/>
            <person name="Perez-Alonso M."/>
            <person name="Boutry M."/>
            <person name="Bancroft I."/>
            <person name="Vos P."/>
            <person name="Hoheisel J."/>
            <person name="Zimmermann W."/>
            <person name="Wedler H."/>
            <person name="Ridley P."/>
            <person name="Langham S.-A."/>
            <person name="McCullagh B."/>
            <person name="Bilham L."/>
            <person name="Robben J."/>
            <person name="van der Schueren J."/>
            <person name="Grymonprez B."/>
            <person name="Chuang Y.-J."/>
            <person name="Vandenbussche F."/>
            <person name="Braeken M."/>
            <person name="Weltjens I."/>
            <person name="Voet M."/>
            <person name="Bastiaens I."/>
            <person name="Aert R."/>
            <person name="Defoor E."/>
            <person name="Weitzenegger T."/>
            <person name="Bothe G."/>
            <person name="Ramsperger U."/>
            <person name="Hilbert H."/>
            <person name="Braun M."/>
            <person name="Holzer E."/>
            <person name="Brandt A."/>
            <person name="Peters S."/>
            <person name="van Staveren M."/>
            <person name="Dirkse W."/>
            <person name="Mooijman P."/>
            <person name="Klein Lankhorst R."/>
            <person name="Rose M."/>
            <person name="Hauf J."/>
            <person name="Koetter P."/>
            <person name="Berneiser S."/>
            <person name="Hempel S."/>
            <person name="Feldpausch M."/>
            <person name="Lamberth S."/>
            <person name="Van den Daele H."/>
            <person name="De Keyser A."/>
            <person name="Buysshaert C."/>
            <person name="Gielen J."/>
            <person name="Villarroel R."/>
            <person name="De Clercq R."/>
            <person name="van Montagu M."/>
            <person name="Rogers J."/>
            <person name="Cronin A."/>
            <person name="Quail M.A."/>
            <person name="Bray-Allen S."/>
            <person name="Clark L."/>
            <person name="Doggett J."/>
            <person name="Hall S."/>
            <person name="Kay M."/>
            <person name="Lennard N."/>
            <person name="McLay K."/>
            <person name="Mayes R."/>
            <person name="Pettett A."/>
            <person name="Rajandream M.A."/>
            <person name="Lyne M."/>
            <person name="Benes V."/>
            <person name="Rechmann S."/>
            <person name="Borkova D."/>
            <person name="Bloecker H."/>
            <person name="Scharfe M."/>
            <person name="Grimm M."/>
            <person name="Loehnert T.-H."/>
            <person name="Dose S."/>
            <person name="de Haan M."/>
            <person name="Maarse A.C."/>
            <person name="Schaefer M."/>
            <person name="Mueller-Auer S."/>
            <person name="Gabel C."/>
            <person name="Fuchs M."/>
            <person name="Fartmann B."/>
            <person name="Granderath K."/>
            <person name="Dauner D."/>
            <person name="Herzl A."/>
            <person name="Neumann S."/>
            <person name="Argiriou A."/>
            <person name="Vitale D."/>
            <person name="Liguori R."/>
            <person name="Piravandi E."/>
            <person name="Massenet O."/>
            <person name="Quigley F."/>
            <person name="Clabauld G."/>
            <person name="Muendlein A."/>
            <person name="Felber R."/>
            <person name="Schnabl S."/>
            <person name="Hiller R."/>
            <person name="Schmidt W."/>
            <person name="Lecharny A."/>
            <person name="Aubourg S."/>
            <person name="Chefdor F."/>
            <person name="Cooke R."/>
            <person name="Berger C."/>
            <person name="Monfort A."/>
            <person name="Casacuberta E."/>
            <person name="Gibbons T."/>
            <person name="Weber N."/>
            <person name="Vandenbol M."/>
            <person name="Bargues M."/>
            <person name="Terol J."/>
            <person name="Torres A."/>
            <person name="Perez-Perez A."/>
            <person name="Purnelle B."/>
            <person name="Bent E."/>
            <person name="Johnson S."/>
            <person name="Tacon D."/>
            <person name="Jesse T."/>
            <person name="Heijnen L."/>
            <person name="Schwarz S."/>
            <person name="Scholler P."/>
            <person name="Heber S."/>
            <person name="Francs P."/>
            <person name="Bielke C."/>
            <person name="Frishman D."/>
            <person name="Haase D."/>
            <person name="Lemcke K."/>
            <person name="Mewes H.-W."/>
            <person name="Stocker S."/>
            <person name="Zaccaria P."/>
            <person name="Bevan M."/>
            <person name="Wilson R.K."/>
            <person name="de la Bastide M."/>
            <person name="Habermann K."/>
            <person name="Parnell L."/>
            <person name="Dedhia N."/>
            <person name="Gnoj L."/>
            <person name="Schutz K."/>
            <person name="Huang E."/>
            <person name="Spiegel L."/>
            <person name="Sekhon M."/>
            <person name="Murray J."/>
            <person name="Sheet P."/>
            <person name="Cordes M."/>
            <person name="Abu-Threideh J."/>
            <person name="Stoneking T."/>
            <person name="Kalicki J."/>
            <person name="Graves T."/>
            <person name="Harmon G."/>
            <person name="Edwards J."/>
            <person name="Latreille P."/>
            <person name="Courtney L."/>
            <person name="Cloud J."/>
            <person name="Abbott A."/>
            <person name="Scott K."/>
            <person name="Johnson D."/>
            <person name="Minx P."/>
            <person name="Bentley D."/>
            <person name="Fulton B."/>
            <person name="Miller N."/>
            <person name="Greco T."/>
            <person name="Kemp K."/>
            <person name="Kramer J."/>
            <person name="Fulton L."/>
            <person name="Mardis E."/>
            <person name="Dante M."/>
            <person name="Pepin K."/>
            <person name="Hillier L.W."/>
            <person name="Nelson J."/>
            <person name="Spieth J."/>
            <person name="Ryan E."/>
            <person name="Andrews S."/>
            <person name="Geisel C."/>
            <person name="Layman D."/>
            <person name="Du H."/>
            <person name="Ali J."/>
            <person name="Berghoff A."/>
            <person name="Jones K."/>
            <person name="Drone K."/>
            <person name="Cotton M."/>
            <person name="Joshu C."/>
            <person name="Antonoiu B."/>
            <person name="Zidanic M."/>
            <person name="Strong C."/>
            <person name="Sun H."/>
            <person name="Lamar B."/>
            <person name="Yordan C."/>
            <person name="Ma P."/>
            <person name="Zhong J."/>
            <person name="Preston R."/>
            <person name="Vil D."/>
            <person name="Shekher M."/>
            <person name="Matero A."/>
            <person name="Shah R."/>
            <person name="Swaby I.K."/>
            <person name="O'Shaughnessy A."/>
            <person name="Rodriguez M."/>
            <person name="Hoffman J."/>
            <person name="Till S."/>
            <person name="Granat S."/>
            <person name="Shohdy N."/>
            <person name="Hasegawa A."/>
            <person name="Hameed A."/>
            <person name="Lodhi M."/>
            <person name="Johnson A."/>
            <person name="Chen E."/>
            <person name="Marra M.A."/>
            <person name="Martienssen R."/>
            <person name="McCombie W.R."/>
        </authorList>
    </citation>
    <scope>NUCLEOTIDE SEQUENCE [LARGE SCALE GENOMIC DNA]</scope>
    <source>
        <strain>cv. Columbia</strain>
    </source>
</reference>
<reference key="3">
    <citation type="journal article" date="2017" name="Plant J.">
        <title>Araport11: a complete reannotation of the Arabidopsis thaliana reference genome.</title>
        <authorList>
            <person name="Cheng C.Y."/>
            <person name="Krishnakumar V."/>
            <person name="Chan A.P."/>
            <person name="Thibaud-Nissen F."/>
            <person name="Schobel S."/>
            <person name="Town C.D."/>
        </authorList>
    </citation>
    <scope>GENOME REANNOTATION</scope>
    <source>
        <strain>cv. Columbia</strain>
    </source>
</reference>
<reference key="4">
    <citation type="journal article" date="2003" name="Science">
        <title>Empirical analysis of transcriptional activity in the Arabidopsis genome.</title>
        <authorList>
            <person name="Yamada K."/>
            <person name="Lim J."/>
            <person name="Dale J.M."/>
            <person name="Chen H."/>
            <person name="Shinn P."/>
            <person name="Palm C.J."/>
            <person name="Southwick A.M."/>
            <person name="Wu H.C."/>
            <person name="Kim C.J."/>
            <person name="Nguyen M."/>
            <person name="Pham P.K."/>
            <person name="Cheuk R.F."/>
            <person name="Karlin-Newmann G."/>
            <person name="Liu S.X."/>
            <person name="Lam B."/>
            <person name="Sakano H."/>
            <person name="Wu T."/>
            <person name="Yu G."/>
            <person name="Miranda M."/>
            <person name="Quach H.L."/>
            <person name="Tripp M."/>
            <person name="Chang C.H."/>
            <person name="Lee J.M."/>
            <person name="Toriumi M.J."/>
            <person name="Chan M.M."/>
            <person name="Tang C.C."/>
            <person name="Onodera C.S."/>
            <person name="Deng J.M."/>
            <person name="Akiyama K."/>
            <person name="Ansari Y."/>
            <person name="Arakawa T."/>
            <person name="Banh J."/>
            <person name="Banno F."/>
            <person name="Bowser L."/>
            <person name="Brooks S.Y."/>
            <person name="Carninci P."/>
            <person name="Chao Q."/>
            <person name="Choy N."/>
            <person name="Enju A."/>
            <person name="Goldsmith A.D."/>
            <person name="Gurjal M."/>
            <person name="Hansen N.F."/>
            <person name="Hayashizaki Y."/>
            <person name="Johnson-Hopson C."/>
            <person name="Hsuan V.W."/>
            <person name="Iida K."/>
            <person name="Karnes M."/>
            <person name="Khan S."/>
            <person name="Koesema E."/>
            <person name="Ishida J."/>
            <person name="Jiang P.X."/>
            <person name="Jones T."/>
            <person name="Kawai J."/>
            <person name="Kamiya A."/>
            <person name="Meyers C."/>
            <person name="Nakajima M."/>
            <person name="Narusaka M."/>
            <person name="Seki M."/>
            <person name="Sakurai T."/>
            <person name="Satou M."/>
            <person name="Tamse R."/>
            <person name="Vaysberg M."/>
            <person name="Wallender E.K."/>
            <person name="Wong C."/>
            <person name="Yamamura Y."/>
            <person name="Yuan S."/>
            <person name="Shinozaki K."/>
            <person name="Davis R.W."/>
            <person name="Theologis A."/>
            <person name="Ecker J.R."/>
        </authorList>
    </citation>
    <scope>NUCLEOTIDE SEQUENCE [LARGE SCALE MRNA]</scope>
    <source>
        <strain>cv. Columbia</strain>
    </source>
</reference>
<reference key="5">
    <citation type="journal article" date="2004" name="Plant Physiol.">
        <title>The GATA family of transcription factors in Arabidopsis and rice.</title>
        <authorList>
            <person name="Reyes J.C."/>
            <person name="Muro-Pastor M.I."/>
            <person name="Florencio F.J."/>
        </authorList>
    </citation>
    <scope>GENE FAMILY ORGANIZATION</scope>
</reference>
<proteinExistence type="evidence at transcript level"/>
<feature type="chain" id="PRO_0000083432" description="GATA transcription factor 3">
    <location>
        <begin position="1"/>
        <end position="269"/>
    </location>
</feature>
<feature type="zinc finger region" description="GATA-type" evidence="2">
    <location>
        <begin position="176"/>
        <end position="230"/>
    </location>
</feature>
<feature type="region of interest" description="Disordered" evidence="3">
    <location>
        <begin position="245"/>
        <end position="269"/>
    </location>
</feature>
<feature type="short sequence motif" description="Nuclear localization signal" evidence="1">
    <location>
        <begin position="136"/>
        <end position="143"/>
    </location>
</feature>
<feature type="sequence conflict" description="In Ref. 4; AAM20641/AAM91307." evidence="5" ref="4">
    <original>R</original>
    <variation>Q</variation>
    <location>
        <position position="35"/>
    </location>
</feature>
<protein>
    <recommendedName>
        <fullName>GATA transcription factor 3</fullName>
        <shortName>AtGATA-3</shortName>
    </recommendedName>
</protein>
<name>GATA3_ARATH</name>
<gene>
    <name type="primary">GATA3</name>
    <name type="ordered locus">At4g34680</name>
    <name type="ORF">T4L20.260</name>
</gene>
<accession>Q8L4M6</accession>
<accession>O49742</accession>
<accession>O65690</accession>
<dbReference type="EMBL" id="Y13650">
    <property type="protein sequence ID" value="CAA74001.1"/>
    <property type="molecule type" value="mRNA"/>
</dbReference>
<dbReference type="EMBL" id="AL023094">
    <property type="protein sequence ID" value="CAA18847.2"/>
    <property type="molecule type" value="Genomic_DNA"/>
</dbReference>
<dbReference type="EMBL" id="AL161586">
    <property type="protein sequence ID" value="CAB80185.1"/>
    <property type="molecule type" value="Genomic_DNA"/>
</dbReference>
<dbReference type="EMBL" id="CP002687">
    <property type="protein sequence ID" value="AEE86409.1"/>
    <property type="molecule type" value="Genomic_DNA"/>
</dbReference>
<dbReference type="EMBL" id="CP002687">
    <property type="protein sequence ID" value="AEE86410.1"/>
    <property type="molecule type" value="Genomic_DNA"/>
</dbReference>
<dbReference type="EMBL" id="AY099790">
    <property type="protein sequence ID" value="AAM20641.1"/>
    <property type="molecule type" value="mRNA"/>
</dbReference>
<dbReference type="EMBL" id="AY128907">
    <property type="protein sequence ID" value="AAM91307.1"/>
    <property type="molecule type" value="mRNA"/>
</dbReference>
<dbReference type="PIR" id="H85408">
    <property type="entry name" value="H85408"/>
</dbReference>
<dbReference type="PIR" id="T05288">
    <property type="entry name" value="T05288"/>
</dbReference>
<dbReference type="RefSeq" id="NP_001031789.1">
    <property type="nucleotide sequence ID" value="NM_001036712.2"/>
</dbReference>
<dbReference type="RefSeq" id="NP_195194.1">
    <property type="nucleotide sequence ID" value="NM_119634.4"/>
</dbReference>
<dbReference type="SMR" id="Q8L4M6"/>
<dbReference type="BioGRID" id="14902">
    <property type="interactions" value="13"/>
</dbReference>
<dbReference type="FunCoup" id="Q8L4M6">
    <property type="interactions" value="1"/>
</dbReference>
<dbReference type="IntAct" id="Q8L4M6">
    <property type="interactions" value="9"/>
</dbReference>
<dbReference type="STRING" id="3702.Q8L4M6"/>
<dbReference type="PaxDb" id="3702-AT4G34680.2"/>
<dbReference type="ProteomicsDB" id="247358"/>
<dbReference type="EnsemblPlants" id="AT4G34680.1">
    <property type="protein sequence ID" value="AT4G34680.1"/>
    <property type="gene ID" value="AT4G34680"/>
</dbReference>
<dbReference type="EnsemblPlants" id="AT4G34680.2">
    <property type="protein sequence ID" value="AT4G34680.2"/>
    <property type="gene ID" value="AT4G34680"/>
</dbReference>
<dbReference type="GeneID" id="829620"/>
<dbReference type="Gramene" id="AT4G34680.1">
    <property type="protein sequence ID" value="AT4G34680.1"/>
    <property type="gene ID" value="AT4G34680"/>
</dbReference>
<dbReference type="Gramene" id="AT4G34680.2">
    <property type="protein sequence ID" value="AT4G34680.2"/>
    <property type="gene ID" value="AT4G34680"/>
</dbReference>
<dbReference type="KEGG" id="ath:AT4G34680"/>
<dbReference type="Araport" id="AT4G34680"/>
<dbReference type="TAIR" id="AT4G34680">
    <property type="gene designation" value="GATA3"/>
</dbReference>
<dbReference type="eggNOG" id="KOG1601">
    <property type="taxonomic scope" value="Eukaryota"/>
</dbReference>
<dbReference type="HOGENOM" id="CLU_045755_1_1_1"/>
<dbReference type="InParanoid" id="Q8L4M6"/>
<dbReference type="OMA" id="TNHQHAA"/>
<dbReference type="OrthoDB" id="2162994at2759"/>
<dbReference type="PhylomeDB" id="Q8L4M6"/>
<dbReference type="PRO" id="PR:Q8L4M6"/>
<dbReference type="Proteomes" id="UP000006548">
    <property type="component" value="Chromosome 4"/>
</dbReference>
<dbReference type="ExpressionAtlas" id="Q8L4M6">
    <property type="expression patterns" value="baseline and differential"/>
</dbReference>
<dbReference type="GO" id="GO:0005730">
    <property type="term" value="C:nucleolus"/>
    <property type="evidence" value="ECO:0007005"/>
    <property type="project" value="TAIR"/>
</dbReference>
<dbReference type="GO" id="GO:0005634">
    <property type="term" value="C:nucleus"/>
    <property type="evidence" value="ECO:0007005"/>
    <property type="project" value="TAIR"/>
</dbReference>
<dbReference type="GO" id="GO:0003700">
    <property type="term" value="F:DNA-binding transcription factor activity"/>
    <property type="evidence" value="ECO:0000250"/>
    <property type="project" value="TAIR"/>
</dbReference>
<dbReference type="GO" id="GO:0000976">
    <property type="term" value="F:transcription cis-regulatory region binding"/>
    <property type="evidence" value="ECO:0000353"/>
    <property type="project" value="TAIR"/>
</dbReference>
<dbReference type="GO" id="GO:0008270">
    <property type="term" value="F:zinc ion binding"/>
    <property type="evidence" value="ECO:0007669"/>
    <property type="project" value="UniProtKB-KW"/>
</dbReference>
<dbReference type="GO" id="GO:0007623">
    <property type="term" value="P:circadian rhythm"/>
    <property type="evidence" value="ECO:0000270"/>
    <property type="project" value="TAIR"/>
</dbReference>
<dbReference type="GO" id="GO:0045893">
    <property type="term" value="P:positive regulation of DNA-templated transcription"/>
    <property type="evidence" value="ECO:0007669"/>
    <property type="project" value="InterPro"/>
</dbReference>
<dbReference type="CDD" id="cd00202">
    <property type="entry name" value="ZnF_GATA"/>
    <property type="match status" value="1"/>
</dbReference>
<dbReference type="FunFam" id="3.30.50.10:FF:000038">
    <property type="entry name" value="GATA transcription factor 14"/>
    <property type="match status" value="1"/>
</dbReference>
<dbReference type="Gene3D" id="3.30.50.10">
    <property type="entry name" value="Erythroid Transcription Factor GATA-1, subunit A"/>
    <property type="match status" value="1"/>
</dbReference>
<dbReference type="InterPro" id="IPR051140">
    <property type="entry name" value="GATA_TF"/>
</dbReference>
<dbReference type="InterPro" id="IPR016679">
    <property type="entry name" value="TF_GATA_pln"/>
</dbReference>
<dbReference type="InterPro" id="IPR000679">
    <property type="entry name" value="Znf_GATA"/>
</dbReference>
<dbReference type="InterPro" id="IPR013088">
    <property type="entry name" value="Znf_NHR/GATA"/>
</dbReference>
<dbReference type="PANTHER" id="PTHR45658">
    <property type="entry name" value="GATA TRANSCRIPTION FACTOR"/>
    <property type="match status" value="1"/>
</dbReference>
<dbReference type="PANTHER" id="PTHR45658:SF41">
    <property type="entry name" value="GATA TRANSCRIPTION FACTOR 3"/>
    <property type="match status" value="1"/>
</dbReference>
<dbReference type="Pfam" id="PF00320">
    <property type="entry name" value="GATA"/>
    <property type="match status" value="1"/>
</dbReference>
<dbReference type="PIRSF" id="PIRSF016992">
    <property type="entry name" value="TF_GATA_plant"/>
    <property type="match status" value="1"/>
</dbReference>
<dbReference type="SMART" id="SM00401">
    <property type="entry name" value="ZnF_GATA"/>
    <property type="match status" value="1"/>
</dbReference>
<dbReference type="SUPFAM" id="SSF57716">
    <property type="entry name" value="Glucocorticoid receptor-like (DNA-binding domain)"/>
    <property type="match status" value="1"/>
</dbReference>
<dbReference type="PROSITE" id="PS00344">
    <property type="entry name" value="GATA_ZN_FINGER_1"/>
    <property type="match status" value="1"/>
</dbReference>
<dbReference type="PROSITE" id="PS50114">
    <property type="entry name" value="GATA_ZN_FINGER_2"/>
    <property type="match status" value="1"/>
</dbReference>
<comment type="function">
    <text evidence="4">Transcriptional activator that specifically binds 5'-GATA-3' or 5'-GAT-3' motifs within gene promoters. May be involved in the regulation of some light-responsive genes.</text>
</comment>
<comment type="subcellular location">
    <subcellularLocation>
        <location evidence="5">Nucleus</location>
    </subcellularLocation>
</comment>
<comment type="tissue specificity">
    <text evidence="4">Mostly expressed in roots. Also expressed in stems, flowers and leaves.</text>
</comment>
<comment type="induction">
    <text evidence="4">In leaves, less expressed in dark than in light.</text>
</comment>
<comment type="similarity">
    <text evidence="5">Belongs to the type IV zinc-finger family. Class A subfamily.</text>
</comment>
<organism>
    <name type="scientific">Arabidopsis thaliana</name>
    <name type="common">Mouse-ear cress</name>
    <dbReference type="NCBI Taxonomy" id="3702"/>
    <lineage>
        <taxon>Eukaryota</taxon>
        <taxon>Viridiplantae</taxon>
        <taxon>Streptophyta</taxon>
        <taxon>Embryophyta</taxon>
        <taxon>Tracheophyta</taxon>
        <taxon>Spermatophyta</taxon>
        <taxon>Magnoliopsida</taxon>
        <taxon>eudicotyledons</taxon>
        <taxon>Gunneridae</taxon>
        <taxon>Pentapetalae</taxon>
        <taxon>rosids</taxon>
        <taxon>malvids</taxon>
        <taxon>Brassicales</taxon>
        <taxon>Brassicaceae</taxon>
        <taxon>Camelineae</taxon>
        <taxon>Arabidopsis</taxon>
    </lineage>
</organism>